<evidence type="ECO:0000250" key="1">
    <source>
        <dbReference type="UniProtKB" id="P26313"/>
    </source>
</evidence>
<evidence type="ECO:0000255" key="2">
    <source>
        <dbReference type="HAMAP-Rule" id="MF_04084"/>
    </source>
</evidence>
<dbReference type="EMBL" id="AF512832">
    <property type="protein sequence ID" value="AAN32963.1"/>
    <property type="molecule type" value="Genomic_RNA"/>
</dbReference>
<dbReference type="RefSeq" id="YP_001649222.1">
    <property type="nucleotide sequence ID" value="NC_010254.1"/>
</dbReference>
<dbReference type="SMR" id="Q8B115"/>
<dbReference type="GlyCosmos" id="Q8B115">
    <property type="glycosylation" value="10 sites, No reported glycans"/>
</dbReference>
<dbReference type="KEGG" id="vg:5848389"/>
<dbReference type="OrthoDB" id="4838at10239"/>
<dbReference type="Proteomes" id="UP000008164">
    <property type="component" value="Genome"/>
</dbReference>
<dbReference type="GO" id="GO:0044167">
    <property type="term" value="C:host cell endoplasmic reticulum membrane"/>
    <property type="evidence" value="ECO:0007669"/>
    <property type="project" value="UniProtKB-SubCell"/>
</dbReference>
<dbReference type="GO" id="GO:0044178">
    <property type="term" value="C:host cell Golgi membrane"/>
    <property type="evidence" value="ECO:0007669"/>
    <property type="project" value="UniProtKB-SubCell"/>
</dbReference>
<dbReference type="GO" id="GO:0020002">
    <property type="term" value="C:host cell plasma membrane"/>
    <property type="evidence" value="ECO:0007669"/>
    <property type="project" value="UniProtKB-SubCell"/>
</dbReference>
<dbReference type="GO" id="GO:0016020">
    <property type="term" value="C:membrane"/>
    <property type="evidence" value="ECO:0007669"/>
    <property type="project" value="UniProtKB-UniRule"/>
</dbReference>
<dbReference type="GO" id="GO:0019031">
    <property type="term" value="C:viral envelope"/>
    <property type="evidence" value="ECO:0007669"/>
    <property type="project" value="UniProtKB-UniRule"/>
</dbReference>
<dbReference type="GO" id="GO:0055036">
    <property type="term" value="C:virion membrane"/>
    <property type="evidence" value="ECO:0007669"/>
    <property type="project" value="UniProtKB-SubCell"/>
</dbReference>
<dbReference type="GO" id="GO:0046872">
    <property type="term" value="F:metal ion binding"/>
    <property type="evidence" value="ECO:0007669"/>
    <property type="project" value="UniProtKB-KW"/>
</dbReference>
<dbReference type="GO" id="GO:0039654">
    <property type="term" value="P:fusion of virus membrane with host endosome membrane"/>
    <property type="evidence" value="ECO:0007669"/>
    <property type="project" value="UniProtKB-UniRule"/>
</dbReference>
<dbReference type="GO" id="GO:0019065">
    <property type="term" value="P:receptor-mediated endocytosis of virus by host cell"/>
    <property type="evidence" value="ECO:0007669"/>
    <property type="project" value="UniProtKB-UniRule"/>
</dbReference>
<dbReference type="GO" id="GO:0019062">
    <property type="term" value="P:virion attachment to host cell"/>
    <property type="evidence" value="ECO:0007669"/>
    <property type="project" value="UniProtKB-UniRule"/>
</dbReference>
<dbReference type="Gene3D" id="6.10.140.1590">
    <property type="match status" value="1"/>
</dbReference>
<dbReference type="Gene3D" id="2.20.28.180">
    <property type="entry name" value="Arenavirus glycoprotein, zinc binding domain"/>
    <property type="match status" value="1"/>
</dbReference>
<dbReference type="HAMAP" id="MF_04084">
    <property type="entry name" value="ARENA_GPC"/>
    <property type="match status" value="1"/>
</dbReference>
<dbReference type="InterPro" id="IPR001535">
    <property type="entry name" value="Arena_glycoprot"/>
</dbReference>
<dbReference type="InterPro" id="IPR043015">
    <property type="entry name" value="Arena_glycoprot_zinc-bd"/>
</dbReference>
<dbReference type="Pfam" id="PF00798">
    <property type="entry name" value="Arena_glycoprot"/>
    <property type="match status" value="2"/>
</dbReference>
<dbReference type="PIRSF" id="PIRSF004028">
    <property type="entry name" value="GPC_ArenaV"/>
    <property type="match status" value="1"/>
</dbReference>
<comment type="function">
    <molecule>Stable signal peptide</molecule>
    <text evidence="2">Functions as a cleaved signal peptide that is retained as the third component of the GP complex (GP-C). Helps to stabilize the spike complex in its native conformation. The SSP is required for efficient glycoprotein expression, post-translational maturation cleavage of G1 and G2, glycoprotein transport to the cell surface plasma membrane, formation of infectious virus particles, and acid pH-dependent glycoprotein-mediated cell fusion.</text>
</comment>
<comment type="function">
    <molecule>Glycoprotein G1</molecule>
    <text evidence="2">Forms the virion spikes together with glycoprotein G2. The glycoprotein spike trimers are connected to the underlying matrix. Interacts with the host receptor leading to virus endocytosis.</text>
</comment>
<comment type="function">
    <molecule>Glycoprotein G2</molecule>
    <text evidence="2">Forms the virion spikes together with glycoprotein G1. The glycoprotein spike trimers are connected to the underlying matrix. Class I viral fusion protein that directs fusion of viral and host endosomal membranes, leading to delivery of the nucleocapsid into the cytoplasm. Membrane fusion is mediated by irreversible conformational changes induced by acidification.</text>
</comment>
<comment type="subunit">
    <molecule>Stable signal peptide</molecule>
    <text evidence="2">Interacts with glycoprotein G2. Part of the GP complex (GP-C) together with glycoprotein G1 and glycoprotein G2. The GP-complex interacts with protein Z, which interacts with ribonucleocapsid; these interactions may induce virion budding.</text>
</comment>
<comment type="subunit">
    <molecule>Glycoprotein G1</molecule>
    <text evidence="2">Homotrimer; disulfide-linked. In pre-fusion state, G1 homotrimers bind G2 homotrimers via ionic interactions. Part of the GP complex (GP-C) together with glycoprotein G2 and the stable signal peptide. The GP-complex interacts with protein Z, which interacts with ribonucleocapsid; these interactions may induce virion budding.</text>
</comment>
<comment type="subunit">
    <molecule>Glycoprotein G2</molecule>
    <text evidence="2">Homotrimer. Interacts with the stable signal peptide. In pre-fusion state, G2 homotrimers bind G1 homotrimers via ionic interactions. Part of the GP complex (GP-C) together with glycoprotein G1 and the stable signal peptide. Acidification in the endosome triggers rearrangements, which ultimately leads to a 6 helix bundle formed by the two heptad repeat domains (HR1 and HR2) in post-fusion state. The GP-complex interacts with protein Z, which interacts with ribonucleocapsid; these interactions may induce virion budding.</text>
</comment>
<comment type="subcellular location">
    <molecule>Stable signal peptide</molecule>
    <subcellularLocation>
        <location evidence="2">Virion membrane</location>
        <topology evidence="2">Single-pass type II membrane protein</topology>
    </subcellularLocation>
    <subcellularLocation>
        <location evidence="2">Host endoplasmic reticulum membrane</location>
        <topology evidence="2">Single-pass type II membrane protein</topology>
    </subcellularLocation>
    <subcellularLocation>
        <location evidence="2">Host Golgi apparatus membrane</location>
        <topology evidence="2">Single-pass type II membrane protein</topology>
    </subcellularLocation>
    <subcellularLocation>
        <location evidence="2">Host cell membrane</location>
        <topology evidence="2">Single-pass type II membrane protein</topology>
    </subcellularLocation>
</comment>
<comment type="subcellular location">
    <molecule>Glycoprotein G1</molecule>
    <subcellularLocation>
        <location evidence="2">Virion membrane</location>
        <topology evidence="2">Peripheral membrane protein</topology>
    </subcellularLocation>
    <subcellularLocation>
        <location evidence="2">Host endoplasmic reticulum membrane</location>
        <topology evidence="2">Peripheral membrane protein</topology>
    </subcellularLocation>
    <subcellularLocation>
        <location evidence="2">Host Golgi apparatus membrane</location>
        <topology evidence="2">Peripheral membrane protein</topology>
    </subcellularLocation>
    <subcellularLocation>
        <location evidence="2">Host cell membrane</location>
        <topology evidence="2">Peripheral membrane protein</topology>
    </subcellularLocation>
</comment>
<comment type="subcellular location">
    <molecule>Glycoprotein G2</molecule>
    <subcellularLocation>
        <location evidence="2">Virion membrane</location>
        <topology evidence="2">Single-pass membrane protein</topology>
    </subcellularLocation>
    <subcellularLocation>
        <location evidence="2">Host endoplasmic reticulum membrane</location>
        <topology evidence="2">Single-pass membrane protein</topology>
    </subcellularLocation>
    <subcellularLocation>
        <location evidence="2">Host Golgi apparatus membrane</location>
        <topology evidence="2">Single-pass membrane protein</topology>
    </subcellularLocation>
    <subcellularLocation>
        <location evidence="2">Host cell membrane</location>
        <topology evidence="2">Single-pass membrane protein</topology>
    </subcellularLocation>
    <text evidence="2">Binding to the stable signal peptide masks endogenous ER localization signals in the cytoplasmic domain of G2 to ensure that only the fully assembled, tripartite GP complex is transported for virion assembly.</text>
</comment>
<comment type="domain">
    <molecule>Stable signal peptide</molecule>
    <text evidence="2">The N-terminus is localized at the extracellular side of the GP-C, with a part embedded in the membrane probably.</text>
</comment>
<comment type="domain">
    <molecule>Glycoprotein G2</molecule>
    <text evidence="2">Contains 1 fusion peptide at the N-terminus, 2 heptad repeats domains HR1 and HR2 and, at the C-terminus, a cytoplasmic domain that plays a role in ER location. Also contains a zinc-binding domain that allows SSP retention in the GPC complex by accepting a cysteine from SSP as the fourth ligand.</text>
</comment>
<comment type="PTM">
    <molecule>Pre-glycoprotein polyprotein GP complex</molecule>
    <text evidence="2">Specific enzymatic cleavages in vivo yield mature proteins. GP-C polyprotein is cleaved in the endoplasmic reticulum by the host protease MBTPS1. Only cleaved glycoprotein is incorporated into virions.</text>
</comment>
<comment type="PTM">
    <molecule>Stable signal peptide</molecule>
    <text evidence="2">The SSP remains stably associated with the GP complex following cleavage by signal peptidase and plays crucial roles in the trafficking of GP through the secretory pathway.</text>
</comment>
<comment type="PTM">
    <molecule>Stable signal peptide</molecule>
    <text evidence="2">Myristoylation is necessary for GP2-mediated fusion activity.</text>
</comment>
<comment type="similarity">
    <text evidence="2">Belongs to the arenaviridae GPC protein family.</text>
</comment>
<feature type="initiator methionine" description="Removed; by host" evidence="2">
    <location>
        <position position="1"/>
    </location>
</feature>
<feature type="chain" id="PRO_0000361584" description="Pre-glycoprotein polyprotein GP complex" evidence="2">
    <location>
        <begin position="2"/>
        <end position="480"/>
    </location>
</feature>
<feature type="chain" id="PRO_0000361585" description="Stable signal peptide" evidence="2">
    <location>
        <begin position="2"/>
        <end position="58"/>
    </location>
</feature>
<feature type="chain" id="PRO_0000361586" description="Glycoprotein G1" evidence="2">
    <location>
        <begin position="59"/>
        <end position="246"/>
    </location>
</feature>
<feature type="chain" id="PRO_0000361587" description="Glycoprotein G2" evidence="2">
    <location>
        <begin position="247"/>
        <end position="480"/>
    </location>
</feature>
<feature type="topological domain" description="Extracellular" evidence="2">
    <location>
        <begin position="2"/>
        <end position="17"/>
    </location>
</feature>
<feature type="transmembrane region" description="Helical" evidence="2">
    <location>
        <begin position="18"/>
        <end position="33"/>
    </location>
</feature>
<feature type="topological domain" description="Cytoplasmic" evidence="2">
    <location>
        <begin position="34"/>
        <end position="58"/>
    </location>
</feature>
<feature type="topological domain" description="Extracellular" evidence="2">
    <location>
        <begin position="59"/>
        <end position="419"/>
    </location>
</feature>
<feature type="transmembrane region" description="Helical" evidence="2">
    <location>
        <begin position="420"/>
        <end position="440"/>
    </location>
</feature>
<feature type="topological domain" description="Cytoplasmic" evidence="2">
    <location>
        <begin position="441"/>
        <end position="480"/>
    </location>
</feature>
<feature type="binding site" evidence="2">
    <location>
        <position position="57"/>
    </location>
    <ligand>
        <name>Zn(2+)</name>
        <dbReference type="ChEBI" id="CHEBI:29105"/>
        <label>1</label>
    </ligand>
</feature>
<feature type="binding site" evidence="2">
    <location>
        <position position="442"/>
    </location>
    <ligand>
        <name>Zn(2+)</name>
        <dbReference type="ChEBI" id="CHEBI:29105"/>
        <label>2</label>
    </ligand>
</feature>
<feature type="binding site" evidence="2">
    <location>
        <position position="444"/>
    </location>
    <ligand>
        <name>Zn(2+)</name>
        <dbReference type="ChEBI" id="CHEBI:29105"/>
        <label>2</label>
    </ligand>
</feature>
<feature type="binding site" evidence="2">
    <location>
        <position position="450"/>
    </location>
    <ligand>
        <name>Zn(2+)</name>
        <dbReference type="ChEBI" id="CHEBI:29105"/>
        <label>2</label>
    </ligand>
</feature>
<feature type="binding site" evidence="2">
    <location>
        <position position="454"/>
    </location>
    <ligand>
        <name>Zn(2+)</name>
        <dbReference type="ChEBI" id="CHEBI:29105"/>
        <label>1</label>
    </ligand>
</feature>
<feature type="binding site" evidence="2">
    <location>
        <position position="462"/>
    </location>
    <ligand>
        <name>Zn(2+)</name>
        <dbReference type="ChEBI" id="CHEBI:29105"/>
        <label>1</label>
    </ligand>
</feature>
<feature type="binding site" evidence="2">
    <location>
        <position position="464"/>
    </location>
    <ligand>
        <name>Zn(2+)</name>
        <dbReference type="ChEBI" id="CHEBI:29105"/>
        <label>1</label>
    </ligand>
</feature>
<feature type="binding site" evidence="2">
    <location>
        <position position="480"/>
    </location>
    <ligand>
        <name>Zn(2+)</name>
        <dbReference type="ChEBI" id="CHEBI:29105"/>
        <label>2</label>
    </ligand>
</feature>
<feature type="site" description="Important for GP-C-mediated membrane fusion" evidence="1">
    <location>
        <position position="33"/>
    </location>
</feature>
<feature type="site" description="Cleavage; by host signal peptidase" evidence="2">
    <location>
        <begin position="58"/>
        <end position="59"/>
    </location>
</feature>
<feature type="site" description="Cleavage; by host MBTPS1" evidence="2">
    <location>
        <begin position="246"/>
        <end position="247"/>
    </location>
</feature>
<feature type="lipid moiety-binding region" description="N-myristoyl glycine; by host" evidence="2">
    <location>
        <position position="2"/>
    </location>
</feature>
<feature type="glycosylation site" description="N-linked (GlcNAc...) asparagine; by host" evidence="2">
    <location>
        <position position="88"/>
    </location>
</feature>
<feature type="glycosylation site" description="N-linked (GlcNAc...) asparagine; by host" evidence="2">
    <location>
        <position position="174"/>
    </location>
</feature>
<feature type="glycosylation site" description="N-linked (GlcNAc...) asparagine; by host" evidence="2">
    <location>
        <position position="214"/>
    </location>
</feature>
<feature type="glycosylation site" description="N-linked (GlcNAc...) asparagine; by host" evidence="2">
    <location>
        <position position="352"/>
    </location>
</feature>
<feature type="glycosylation site" description="N-linked (GlcNAc...) asparagine; by host" evidence="2">
    <location>
        <position position="360"/>
    </location>
</feature>
<feature type="glycosylation site" description="N-linked (GlcNAc...) asparagine; by host" evidence="2">
    <location>
        <position position="377"/>
    </location>
</feature>
<feature type="glycosylation site" description="N-linked (GlcNAc...) asparagine; by host" evidence="2">
    <location>
        <position position="382"/>
    </location>
</feature>
<feature type="disulfide bond" evidence="2">
    <location>
        <begin position="85"/>
        <end position="221"/>
    </location>
</feature>
<feature type="disulfide bond" evidence="2">
    <location>
        <begin position="266"/>
        <end position="279"/>
    </location>
</feature>
<feature type="disulfide bond" evidence="2">
    <location>
        <begin position="288"/>
        <end position="297"/>
    </location>
</feature>
<feature type="disulfide bond" evidence="2">
    <location>
        <begin position="351"/>
        <end position="372"/>
    </location>
</feature>
<proteinExistence type="inferred from homology"/>
<organism>
    <name type="scientific">Cupixi mammarenavirus (isolate Rat/Brasil/BeAn 119303/1970)</name>
    <name type="common">CPXV</name>
    <dbReference type="NCBI Taxonomy" id="3052304"/>
    <lineage>
        <taxon>Viruses</taxon>
        <taxon>Riboviria</taxon>
        <taxon>Orthornavirae</taxon>
        <taxon>Negarnaviricota</taxon>
        <taxon>Polyploviricotina</taxon>
        <taxon>Ellioviricetes</taxon>
        <taxon>Bunyavirales</taxon>
        <taxon>Arenaviridae</taxon>
        <taxon>Mammarenavirus</taxon>
    </lineage>
</organism>
<gene>
    <name evidence="2" type="primary">GPC</name>
    <name type="synonym">GP-C</name>
</gene>
<name>GLYC_CPXVB</name>
<protein>
    <recommendedName>
        <fullName evidence="2">Pre-glycoprotein polyprotein GP complex</fullName>
        <shortName evidence="2">Pre-GP-C</shortName>
    </recommendedName>
    <component>
        <recommendedName>
            <fullName evidence="2">Stable signal peptide</fullName>
            <shortName evidence="2">SSP</shortName>
        </recommendedName>
    </component>
    <component>
        <recommendedName>
            <fullName evidence="2">Glycoprotein G1</fullName>
            <shortName evidence="2">GP1</shortName>
        </recommendedName>
    </component>
    <component>
        <recommendedName>
            <fullName evidence="2">Glycoprotein G2</fullName>
            <shortName evidence="2">GP2</shortName>
        </recommendedName>
    </component>
</protein>
<accession>Q8B115</accession>
<organismHost>
    <name type="scientific">Hylaeamys megacephalus</name>
    <name type="common">Large-headed rice rat</name>
    <name type="synonym">Oryzomys megacephalus</name>
    <dbReference type="NCBI Taxonomy" id="89099"/>
</organismHost>
<keyword id="KW-1015">Disulfide bond</keyword>
<keyword id="KW-1170">Fusion of virus membrane with host endosomal membrane</keyword>
<keyword id="KW-1168">Fusion of virus membrane with host membrane</keyword>
<keyword id="KW-0325">Glycoprotein</keyword>
<keyword id="KW-1032">Host cell membrane</keyword>
<keyword id="KW-1038">Host endoplasmic reticulum</keyword>
<keyword id="KW-1040">Host Golgi apparatus</keyword>
<keyword id="KW-1043">Host membrane</keyword>
<keyword id="KW-0945">Host-virus interaction</keyword>
<keyword id="KW-0449">Lipoprotein</keyword>
<keyword id="KW-0472">Membrane</keyword>
<keyword id="KW-0479">Metal-binding</keyword>
<keyword id="KW-0519">Myristate</keyword>
<keyword id="KW-1185">Reference proteome</keyword>
<keyword id="KW-0812">Transmembrane</keyword>
<keyword id="KW-1133">Transmembrane helix</keyword>
<keyword id="KW-1161">Viral attachment to host cell</keyword>
<keyword id="KW-0261">Viral envelope protein</keyword>
<keyword id="KW-1162">Viral penetration into host cytoplasm</keyword>
<keyword id="KW-0946">Virion</keyword>
<keyword id="KW-1164">Virus endocytosis by host</keyword>
<keyword id="KW-1160">Virus entry into host cell</keyword>
<keyword id="KW-0862">Zinc</keyword>
<reference key="1">
    <citation type="journal article" date="2002" name="Biochem. Biophys. Res. Commun.">
        <title>Phylogeny of New World arenaviruses based on the complete coding sequences of the small genomic segment identified an evolutionary lineage produced by intrasegmental recombination.</title>
        <authorList>
            <person name="Charrel R.N."/>
            <person name="Feldmann H."/>
            <person name="Fulhorst C.F."/>
            <person name="Khelifa R."/>
            <person name="de Chesse R."/>
            <person name="de Lamballerie X."/>
        </authorList>
    </citation>
    <scope>NUCLEOTIDE SEQUENCE [GENOMIC RNA]</scope>
    <source>
        <strain>BeAn 119303</strain>
    </source>
</reference>
<reference key="2">
    <citation type="journal article" date="2008" name="Curr. Opin. Microbiol.">
        <title>Phylogeny of the genus Arenavirus.</title>
        <authorList>
            <person name="Charrel R.N."/>
            <person name="de Lamballerie X."/>
            <person name="Emonet S."/>
        </authorList>
    </citation>
    <scope>NUCLEOTIDE SEQUENCE [GENOMIC RNA]</scope>
    <source>
        <strain>BeAn 119303</strain>
    </source>
</reference>
<sequence>MGQLVSFFQEIPVFFQEALNIALAVVTLLAIVKGVLNLWKSGLFQLLMFLILAGRSCSFRIGYHTSFESFTMTIGGVFHELPALCKVNDTYNLVRLSHNSSLALSVEYGDTGTVMCEHGHVVSGNYTECTGASEEYNWVLDWVLRGLQHDFSRDPVICCEPKKKTNAEFQFRLNLTQRHKGDHYQNKIKTALTHLFGPFAYNEKDPKIFVTMRNTTWTNQCVMSHTDSLRLLASNGGNSFSGRGLKAFFSWSLSDSTGVDMPGGYCLEKWMLIASELKCFGNTALAKCNLKHDSEFCDMIKLFDFNKNAISKLNNNTIEAVNQLTKTVNSLISDNLLMKNRLRELLKVPYCNYTRFWYVNHTRTGEHSLPKCWLVNNGSYLNESDFRNEWILESDHLISEMLSKEYQERQGRTPLTLVDLCFWSAVFYTTTLFLHLVGFPTHRHISGEPCPLPHRLNRHGACNCGRFKRLKKPLVWYKHH</sequence>